<proteinExistence type="inferred from homology"/>
<protein>
    <recommendedName>
        <fullName evidence="1">Tyrosine--tRNA ligase</fullName>
        <ecNumber evidence="1">6.1.1.1</ecNumber>
    </recommendedName>
    <alternativeName>
        <fullName evidence="1">Tyrosyl-tRNA synthetase</fullName>
        <shortName evidence="1">TyrRS</shortName>
    </alternativeName>
</protein>
<keyword id="KW-0030">Aminoacyl-tRNA synthetase</keyword>
<keyword id="KW-0067">ATP-binding</keyword>
<keyword id="KW-0963">Cytoplasm</keyword>
<keyword id="KW-0436">Ligase</keyword>
<keyword id="KW-0547">Nucleotide-binding</keyword>
<keyword id="KW-0648">Protein biosynthesis</keyword>
<keyword id="KW-0694">RNA-binding</keyword>
<reference key="1">
    <citation type="journal article" date="2006" name="Genome Res.">
        <title>Massive genome erosion and functional adaptations provide insights into the symbiotic lifestyle of Sodalis glossinidius in the tsetse host.</title>
        <authorList>
            <person name="Toh H."/>
            <person name="Weiss B.L."/>
            <person name="Perkin S.A.H."/>
            <person name="Yamashita A."/>
            <person name="Oshima K."/>
            <person name="Hattori M."/>
            <person name="Aksoy S."/>
        </authorList>
    </citation>
    <scope>NUCLEOTIDE SEQUENCE [LARGE SCALE GENOMIC DNA]</scope>
    <source>
        <strain>morsitans</strain>
    </source>
</reference>
<dbReference type="EC" id="6.1.1.1" evidence="1"/>
<dbReference type="EMBL" id="AP008232">
    <property type="protein sequence ID" value="BAE74723.1"/>
    <property type="molecule type" value="Genomic_DNA"/>
</dbReference>
<dbReference type="RefSeq" id="WP_011411268.1">
    <property type="nucleotide sequence ID" value="NC_007712.1"/>
</dbReference>
<dbReference type="SMR" id="Q2NT02"/>
<dbReference type="STRING" id="343509.SG1448"/>
<dbReference type="KEGG" id="sgl:SG1448"/>
<dbReference type="eggNOG" id="COG0162">
    <property type="taxonomic scope" value="Bacteria"/>
</dbReference>
<dbReference type="HOGENOM" id="CLU_024003_0_3_6"/>
<dbReference type="OrthoDB" id="9804243at2"/>
<dbReference type="BioCyc" id="SGLO343509:SGP1_RS12835-MONOMER"/>
<dbReference type="Proteomes" id="UP000001932">
    <property type="component" value="Chromosome"/>
</dbReference>
<dbReference type="GO" id="GO:0005829">
    <property type="term" value="C:cytosol"/>
    <property type="evidence" value="ECO:0007669"/>
    <property type="project" value="TreeGrafter"/>
</dbReference>
<dbReference type="GO" id="GO:0005524">
    <property type="term" value="F:ATP binding"/>
    <property type="evidence" value="ECO:0007669"/>
    <property type="project" value="UniProtKB-UniRule"/>
</dbReference>
<dbReference type="GO" id="GO:0003723">
    <property type="term" value="F:RNA binding"/>
    <property type="evidence" value="ECO:0007669"/>
    <property type="project" value="UniProtKB-KW"/>
</dbReference>
<dbReference type="GO" id="GO:0004831">
    <property type="term" value="F:tyrosine-tRNA ligase activity"/>
    <property type="evidence" value="ECO:0007669"/>
    <property type="project" value="UniProtKB-UniRule"/>
</dbReference>
<dbReference type="GO" id="GO:0006437">
    <property type="term" value="P:tyrosyl-tRNA aminoacylation"/>
    <property type="evidence" value="ECO:0007669"/>
    <property type="project" value="UniProtKB-UniRule"/>
</dbReference>
<dbReference type="CDD" id="cd00165">
    <property type="entry name" value="S4"/>
    <property type="match status" value="1"/>
</dbReference>
<dbReference type="CDD" id="cd00805">
    <property type="entry name" value="TyrRS_core"/>
    <property type="match status" value="1"/>
</dbReference>
<dbReference type="FunFam" id="1.10.240.10:FF:000001">
    <property type="entry name" value="Tyrosine--tRNA ligase"/>
    <property type="match status" value="1"/>
</dbReference>
<dbReference type="FunFam" id="3.40.50.620:FF:000008">
    <property type="entry name" value="Tyrosine--tRNA ligase"/>
    <property type="match status" value="1"/>
</dbReference>
<dbReference type="Gene3D" id="3.40.50.620">
    <property type="entry name" value="HUPs"/>
    <property type="match status" value="1"/>
</dbReference>
<dbReference type="Gene3D" id="3.10.290.10">
    <property type="entry name" value="RNA-binding S4 domain"/>
    <property type="match status" value="1"/>
</dbReference>
<dbReference type="Gene3D" id="1.10.240.10">
    <property type="entry name" value="Tyrosyl-Transfer RNA Synthetase"/>
    <property type="match status" value="1"/>
</dbReference>
<dbReference type="HAMAP" id="MF_02006">
    <property type="entry name" value="Tyr_tRNA_synth_type1"/>
    <property type="match status" value="1"/>
</dbReference>
<dbReference type="InterPro" id="IPR001412">
    <property type="entry name" value="aa-tRNA-synth_I_CS"/>
</dbReference>
<dbReference type="InterPro" id="IPR002305">
    <property type="entry name" value="aa-tRNA-synth_Ic"/>
</dbReference>
<dbReference type="InterPro" id="IPR014729">
    <property type="entry name" value="Rossmann-like_a/b/a_fold"/>
</dbReference>
<dbReference type="InterPro" id="IPR036986">
    <property type="entry name" value="S4_RNA-bd_sf"/>
</dbReference>
<dbReference type="InterPro" id="IPR054608">
    <property type="entry name" value="SYY-like_C"/>
</dbReference>
<dbReference type="InterPro" id="IPR002307">
    <property type="entry name" value="Tyr-tRNA-ligase"/>
</dbReference>
<dbReference type="InterPro" id="IPR024088">
    <property type="entry name" value="Tyr-tRNA-ligase_bac-type"/>
</dbReference>
<dbReference type="InterPro" id="IPR024107">
    <property type="entry name" value="Tyr-tRNA-ligase_bac_1"/>
</dbReference>
<dbReference type="NCBIfam" id="TIGR00234">
    <property type="entry name" value="tyrS"/>
    <property type="match status" value="1"/>
</dbReference>
<dbReference type="PANTHER" id="PTHR11766:SF0">
    <property type="entry name" value="TYROSINE--TRNA LIGASE, MITOCHONDRIAL"/>
    <property type="match status" value="1"/>
</dbReference>
<dbReference type="PANTHER" id="PTHR11766">
    <property type="entry name" value="TYROSYL-TRNA SYNTHETASE"/>
    <property type="match status" value="1"/>
</dbReference>
<dbReference type="Pfam" id="PF22421">
    <property type="entry name" value="SYY_C-terminal"/>
    <property type="match status" value="1"/>
</dbReference>
<dbReference type="Pfam" id="PF00579">
    <property type="entry name" value="tRNA-synt_1b"/>
    <property type="match status" value="1"/>
</dbReference>
<dbReference type="PRINTS" id="PR01040">
    <property type="entry name" value="TRNASYNTHTYR"/>
</dbReference>
<dbReference type="SUPFAM" id="SSF55174">
    <property type="entry name" value="Alpha-L RNA-binding motif"/>
    <property type="match status" value="1"/>
</dbReference>
<dbReference type="SUPFAM" id="SSF52374">
    <property type="entry name" value="Nucleotidylyl transferase"/>
    <property type="match status" value="1"/>
</dbReference>
<dbReference type="PROSITE" id="PS00178">
    <property type="entry name" value="AA_TRNA_LIGASE_I"/>
    <property type="match status" value="1"/>
</dbReference>
<dbReference type="PROSITE" id="PS50889">
    <property type="entry name" value="S4"/>
    <property type="match status" value="1"/>
</dbReference>
<feature type="chain" id="PRO_0000234771" description="Tyrosine--tRNA ligase">
    <location>
        <begin position="1"/>
        <end position="424"/>
    </location>
</feature>
<feature type="domain" description="S4 RNA-binding" evidence="1">
    <location>
        <begin position="357"/>
        <end position="414"/>
    </location>
</feature>
<feature type="short sequence motif" description="'HIGH' region">
    <location>
        <begin position="42"/>
        <end position="51"/>
    </location>
</feature>
<feature type="short sequence motif" description="'KMSKS' region">
    <location>
        <begin position="235"/>
        <end position="239"/>
    </location>
</feature>
<feature type="binding site" evidence="1">
    <location>
        <position position="37"/>
    </location>
    <ligand>
        <name>L-tyrosine</name>
        <dbReference type="ChEBI" id="CHEBI:58315"/>
    </ligand>
</feature>
<feature type="binding site" evidence="1">
    <location>
        <position position="175"/>
    </location>
    <ligand>
        <name>L-tyrosine</name>
        <dbReference type="ChEBI" id="CHEBI:58315"/>
    </ligand>
</feature>
<feature type="binding site" evidence="1">
    <location>
        <position position="179"/>
    </location>
    <ligand>
        <name>L-tyrosine</name>
        <dbReference type="ChEBI" id="CHEBI:58315"/>
    </ligand>
</feature>
<feature type="binding site" evidence="1">
    <location>
        <position position="238"/>
    </location>
    <ligand>
        <name>ATP</name>
        <dbReference type="ChEBI" id="CHEBI:30616"/>
    </ligand>
</feature>
<accession>Q2NT02</accession>
<name>SYY_SODGM</name>
<gene>
    <name evidence="1" type="primary">tyrS</name>
    <name type="ordered locus">SG1448</name>
</gene>
<organism>
    <name type="scientific">Sodalis glossinidius (strain morsitans)</name>
    <dbReference type="NCBI Taxonomy" id="343509"/>
    <lineage>
        <taxon>Bacteria</taxon>
        <taxon>Pseudomonadati</taxon>
        <taxon>Pseudomonadota</taxon>
        <taxon>Gammaproteobacteria</taxon>
        <taxon>Enterobacterales</taxon>
        <taxon>Bruguierivoracaceae</taxon>
        <taxon>Sodalis</taxon>
    </lineage>
</organism>
<comment type="function">
    <text evidence="1">Catalyzes the attachment of tyrosine to tRNA(Tyr) in a two-step reaction: tyrosine is first activated by ATP to form Tyr-AMP and then transferred to the acceptor end of tRNA(Tyr).</text>
</comment>
<comment type="catalytic activity">
    <reaction evidence="1">
        <text>tRNA(Tyr) + L-tyrosine + ATP = L-tyrosyl-tRNA(Tyr) + AMP + diphosphate + H(+)</text>
        <dbReference type="Rhea" id="RHEA:10220"/>
        <dbReference type="Rhea" id="RHEA-COMP:9706"/>
        <dbReference type="Rhea" id="RHEA-COMP:9707"/>
        <dbReference type="ChEBI" id="CHEBI:15378"/>
        <dbReference type="ChEBI" id="CHEBI:30616"/>
        <dbReference type="ChEBI" id="CHEBI:33019"/>
        <dbReference type="ChEBI" id="CHEBI:58315"/>
        <dbReference type="ChEBI" id="CHEBI:78442"/>
        <dbReference type="ChEBI" id="CHEBI:78536"/>
        <dbReference type="ChEBI" id="CHEBI:456215"/>
        <dbReference type="EC" id="6.1.1.1"/>
    </reaction>
</comment>
<comment type="subunit">
    <text evidence="1">Homodimer.</text>
</comment>
<comment type="subcellular location">
    <subcellularLocation>
        <location evidence="1">Cytoplasm</location>
    </subcellularLocation>
</comment>
<comment type="similarity">
    <text evidence="1">Belongs to the class-I aminoacyl-tRNA synthetase family. TyrS type 1 subfamily.</text>
</comment>
<sequence>MASSNLIQQLQERGLIAQVTDEKALAERLAAGPIALYCGFDPTADSLHLGHLVPLLCLKRFQLAGHRPVALVGGATGLIGDPSFKATERKLNTAETVQEWVEKIKRQVSPFLDFDCGDNSAVAANNYDWFGSMNVLTFLLDIGKHFSVNQMINKEAVKQRLNRDDSGISFTEFSYNLLQGYDFACLNKQYGVALQIGGSDQWGNITSGIDLTRRLHQNTVYGLTVPLITKADGTKFGKTEGGAVWLDPSKTSPYKFYQFWINTADSDVYLFLKFFTFLDLAAIDALEQEDRASDKAPRAQYVLAEEVTRMVHGEQGLAAAKRITASLFSGALADLTEDDFAQLAQDGMPTVHLERVADLQQALVAAELVPSRGQARTLISSNAVSVNGEKQASIDYVFDDADRLYSRYTLLRRGKKHYCLLNWQ</sequence>
<evidence type="ECO:0000255" key="1">
    <source>
        <dbReference type="HAMAP-Rule" id="MF_02006"/>
    </source>
</evidence>